<keyword id="KW-0025">Alternative splicing</keyword>
<keyword id="KW-0238">DNA-binding</keyword>
<keyword id="KW-0539">Nucleus</keyword>
<keyword id="KW-0607">Phytochrome signaling pathway</keyword>
<keyword id="KW-1185">Reference proteome</keyword>
<keyword id="KW-0346">Stress response</keyword>
<keyword id="KW-0804">Transcription</keyword>
<keyword id="KW-0805">Transcription regulation</keyword>
<reference key="1">
    <citation type="journal article" date="2002" name="EMBO J.">
        <title>PIF4, a phytochrome-interacting bHLH factor, functions as a negative regulator of phytochrome B signaling in Arabidopsis.</title>
        <authorList>
            <person name="Huq E."/>
            <person name="Quail P.H."/>
        </authorList>
    </citation>
    <scope>NUCLEOTIDE SEQUENCE [MRNA] (ISOFORM LONG)</scope>
    <source>
        <strain>cv. Wassilewskija</strain>
    </source>
</reference>
<reference key="2">
    <citation type="journal article" date="2003" name="Mol. Biol. Evol.">
        <title>The basic helix-loop-helix transcription factor family in plants: a genome-wide study of protein structure and functional diversity.</title>
        <authorList>
            <person name="Heim M.A."/>
            <person name="Jakoby M."/>
            <person name="Werber M."/>
            <person name="Martin C."/>
            <person name="Weisshaar B."/>
            <person name="Bailey P.C."/>
        </authorList>
    </citation>
    <scope>NUCLEOTIDE SEQUENCE [MRNA] (ISOFORM LONG)</scope>
    <scope>INDUCTION BY UV LIGHT</scope>
    <scope>GENE FAMILY</scope>
    <scope>NOMENCLATURE</scope>
    <source>
        <strain>cv. Columbia</strain>
    </source>
</reference>
<reference key="3">
    <citation type="journal article" date="1999" name="Nature">
        <title>Sequence and analysis of chromosome 2 of the plant Arabidopsis thaliana.</title>
        <authorList>
            <person name="Lin X."/>
            <person name="Kaul S."/>
            <person name="Rounsley S.D."/>
            <person name="Shea T.P."/>
            <person name="Benito M.-I."/>
            <person name="Town C.D."/>
            <person name="Fujii C.Y."/>
            <person name="Mason T.M."/>
            <person name="Bowman C.L."/>
            <person name="Barnstead M.E."/>
            <person name="Feldblyum T.V."/>
            <person name="Buell C.R."/>
            <person name="Ketchum K.A."/>
            <person name="Lee J.J."/>
            <person name="Ronning C.M."/>
            <person name="Koo H.L."/>
            <person name="Moffat K.S."/>
            <person name="Cronin L.A."/>
            <person name="Shen M."/>
            <person name="Pai G."/>
            <person name="Van Aken S."/>
            <person name="Umayam L."/>
            <person name="Tallon L.J."/>
            <person name="Gill J.E."/>
            <person name="Adams M.D."/>
            <person name="Carrera A.J."/>
            <person name="Creasy T.H."/>
            <person name="Goodman H.M."/>
            <person name="Somerville C.R."/>
            <person name="Copenhaver G.P."/>
            <person name="Preuss D."/>
            <person name="Nierman W.C."/>
            <person name="White O."/>
            <person name="Eisen J.A."/>
            <person name="Salzberg S.L."/>
            <person name="Fraser C.M."/>
            <person name="Venter J.C."/>
        </authorList>
    </citation>
    <scope>NUCLEOTIDE SEQUENCE [LARGE SCALE GENOMIC DNA]</scope>
    <source>
        <strain>cv. Columbia</strain>
    </source>
</reference>
<reference key="4">
    <citation type="journal article" date="2017" name="Plant J.">
        <title>Araport11: a complete reannotation of the Arabidopsis thaliana reference genome.</title>
        <authorList>
            <person name="Cheng C.Y."/>
            <person name="Krishnakumar V."/>
            <person name="Chan A.P."/>
            <person name="Thibaud-Nissen F."/>
            <person name="Schobel S."/>
            <person name="Town C.D."/>
        </authorList>
    </citation>
    <scope>GENOME REANNOTATION</scope>
    <source>
        <strain>cv. Columbia</strain>
    </source>
</reference>
<reference key="5">
    <citation type="journal article" date="2003" name="Science">
        <title>Empirical analysis of transcriptional activity in the Arabidopsis genome.</title>
        <authorList>
            <person name="Yamada K."/>
            <person name="Lim J."/>
            <person name="Dale J.M."/>
            <person name="Chen H."/>
            <person name="Shinn P."/>
            <person name="Palm C.J."/>
            <person name="Southwick A.M."/>
            <person name="Wu H.C."/>
            <person name="Kim C.J."/>
            <person name="Nguyen M."/>
            <person name="Pham P.K."/>
            <person name="Cheuk R.F."/>
            <person name="Karlin-Newmann G."/>
            <person name="Liu S.X."/>
            <person name="Lam B."/>
            <person name="Sakano H."/>
            <person name="Wu T."/>
            <person name="Yu G."/>
            <person name="Miranda M."/>
            <person name="Quach H.L."/>
            <person name="Tripp M."/>
            <person name="Chang C.H."/>
            <person name="Lee J.M."/>
            <person name="Toriumi M.J."/>
            <person name="Chan M.M."/>
            <person name="Tang C.C."/>
            <person name="Onodera C.S."/>
            <person name="Deng J.M."/>
            <person name="Akiyama K."/>
            <person name="Ansari Y."/>
            <person name="Arakawa T."/>
            <person name="Banh J."/>
            <person name="Banno F."/>
            <person name="Bowser L."/>
            <person name="Brooks S.Y."/>
            <person name="Carninci P."/>
            <person name="Chao Q."/>
            <person name="Choy N."/>
            <person name="Enju A."/>
            <person name="Goldsmith A.D."/>
            <person name="Gurjal M."/>
            <person name="Hansen N.F."/>
            <person name="Hayashizaki Y."/>
            <person name="Johnson-Hopson C."/>
            <person name="Hsuan V.W."/>
            <person name="Iida K."/>
            <person name="Karnes M."/>
            <person name="Khan S."/>
            <person name="Koesema E."/>
            <person name="Ishida J."/>
            <person name="Jiang P.X."/>
            <person name="Jones T."/>
            <person name="Kawai J."/>
            <person name="Kamiya A."/>
            <person name="Meyers C."/>
            <person name="Nakajima M."/>
            <person name="Narusaka M."/>
            <person name="Seki M."/>
            <person name="Sakurai T."/>
            <person name="Satou M."/>
            <person name="Tamse R."/>
            <person name="Vaysberg M."/>
            <person name="Wallender E.K."/>
            <person name="Wong C."/>
            <person name="Yamamura Y."/>
            <person name="Yuan S."/>
            <person name="Shinozaki K."/>
            <person name="Davis R.W."/>
            <person name="Theologis A."/>
            <person name="Ecker J.R."/>
        </authorList>
    </citation>
    <scope>NUCLEOTIDE SEQUENCE [LARGE SCALE MRNA] (ISOFORM SHORT)</scope>
    <source>
        <strain>cv. Columbia</strain>
    </source>
</reference>
<reference key="6">
    <citation type="journal article" date="2007" name="Mol. Ecol.">
        <title>Sequence diversity and haplotype associations with phenotypic responses to crowding: GIGANTEA affects fruit set in Arabidopsis thaliana.</title>
        <authorList>
            <person name="Brock M.T."/>
            <person name="Tiffin P."/>
            <person name="Weinig C."/>
        </authorList>
    </citation>
    <scope>NUCLEOTIDE SEQUENCE [GENOMIC DNA] OF 56-306</scope>
    <scope>VARIANT ASP-231</scope>
    <source>
        <strain>cv. An-2</strain>
        <strain>cv. Bla-6</strain>
        <strain>cv. Br-0</strain>
        <strain>cv. Bu-2</strain>
        <strain>cv. Columbia</strain>
        <strain>cv. Et-0</strain>
        <strain>cv. Kl-1</strain>
        <strain>cv. Li-5:3</strain>
        <strain>cv. Ma-2</strain>
        <strain>cv. Mt-0</strain>
        <strain>cv. Pa-2</strain>
        <strain>cv. Pi-0</strain>
        <strain>cv. Su-0</strain>
        <strain>cv. Tsu-1</strain>
    </source>
</reference>
<reference key="7">
    <citation type="journal article" date="2003" name="Plant Cell">
        <title>The Arabidopsis basic/helix-loop-helix transcription factor family.</title>
        <authorList>
            <person name="Toledo-Ortiz G."/>
            <person name="Huq E."/>
            <person name="Quail P.H."/>
        </authorList>
    </citation>
    <scope>GENE FAMILY</scope>
    <scope>INTERACTION WITH PIF3</scope>
</reference>
<reference key="8">
    <citation type="journal article" date="2003" name="Plant Cell Physiol.">
        <title>A link between circadian-controlled bHLH factors and the APRR1/TOC1 quintet in Arabidopsis thaliana.</title>
        <authorList>
            <person name="Yamashino T."/>
            <person name="Matsushika A."/>
            <person name="Fujimori T."/>
            <person name="Sato S."/>
            <person name="Kato T."/>
            <person name="Tabata S."/>
            <person name="Mizuno T."/>
        </authorList>
    </citation>
    <scope>INTERACTION WITH APRR1</scope>
    <scope>INDUCTION</scope>
</reference>
<reference key="9">
    <citation type="journal article" date="2010" name="Mol. Biol. Evol.">
        <title>Transcriptional diversification and functional conservation between DELLA proteins in Arabidopsis.</title>
        <authorList>
            <person name="Gallego-Bartolome J."/>
            <person name="Minguet E.G."/>
            <person name="Marin J.A."/>
            <person name="Prat S."/>
            <person name="Blazquez M.A."/>
            <person name="Alabadi D."/>
        </authorList>
    </citation>
    <scope>INTERACTION WITH RGL2 AND RGA</scope>
    <source>
        <strain>cv. Landsberg erecta</strain>
    </source>
</reference>
<reference key="10">
    <citation type="journal article" date="2013" name="Mol. Cells">
        <title>A competitive peptide inhibitor KIDARI negatively regulates HFR1 by forming nonfunctional heterodimers in Arabidopsis photomorphogenesis.</title>
        <authorList>
            <person name="Hong S.Y."/>
            <person name="Seo P.J."/>
            <person name="Ryu J.Y."/>
            <person name="Cho S.H."/>
            <person name="Woo J.C."/>
            <person name="Park C.M."/>
        </authorList>
    </citation>
    <scope>INTERACTION WITH HFR1</scope>
</reference>
<reference key="11">
    <citation type="journal article" date="2013" name="Mol. Cells">
        <title>Phytochrome-interacting factors have both shared and distinct biological roles.</title>
        <authorList>
            <person name="Jeong J."/>
            <person name="Choi G."/>
        </authorList>
    </citation>
    <scope>TISSUE SPECIFICITY</scope>
    <scope>DEVELOPMENTAL STAGE</scope>
    <scope>INDUCTION BY COLD; HEAT; SALT; ETHYLENE AND AUXIN</scope>
    <scope>GENE FAMILY</scope>
    <scope>NOMENCLATURE</scope>
    <scope>REVIEW</scope>
</reference>
<reference key="12">
    <citation type="journal article" date="2015" name="Plant Cell">
        <title>HEMERA couples the proteolysis and transcriptional activity of PHYTOCHROME INTERACTING FACTORs in Arabidopsis photomorphogenesis.</title>
        <authorList>
            <person name="Qiu Y."/>
            <person name="Li M."/>
            <person name="Pasoreck E.K."/>
            <person name="Long L."/>
            <person name="Shi Y."/>
            <person name="Galvao R.M."/>
            <person name="Chou C.L."/>
            <person name="Wang H."/>
            <person name="Sun A.Y."/>
            <person name="Zhang Y.C."/>
            <person name="Jiang A."/>
            <person name="Chen M."/>
        </authorList>
    </citation>
    <scope>INTERACTION WITH PTAC12/HMR/PAP5</scope>
    <source>
        <strain>cv. Columbia</strain>
    </source>
</reference>
<reference key="13">
    <citation type="journal article" date="2016" name="Cell">
        <title>Cryptochromes interact directly with PIFs to control plant growth in limiting blue light.</title>
        <authorList>
            <person name="Pedmale U.V."/>
            <person name="Huang S.S."/>
            <person name="Zander M."/>
            <person name="Cole B.J."/>
            <person name="Hetzel J."/>
            <person name="Ljung K."/>
            <person name="Reis P.A."/>
            <person name="Sridevi P."/>
            <person name="Nito K."/>
            <person name="Nery J.R."/>
            <person name="Ecker J.R."/>
            <person name="Chory J."/>
        </authorList>
    </citation>
    <scope>FUNCTION</scope>
    <scope>INTERACTION WITH PHYB; CRY1 AND CRY2</scope>
</reference>
<reference key="14">
    <citation type="journal article" date="2019" name="Nat. Commun.">
        <title>Daytime temperature is sensed by phytochrome B in Arabidopsis through a transcriptional activator HEMERA.</title>
        <authorList>
            <person name="Qiu Y."/>
            <person name="Li M."/>
            <person name="Kim R.J.-A."/>
            <person name="Moore C.M."/>
            <person name="Chen M."/>
        </authorList>
    </citation>
    <scope>FUNCTION</scope>
    <scope>DISRUPTION PHENOTYPE</scope>
    <scope>INTERACTION WITH PTAC12/HMR/PAP5</scope>
    <scope>INDUCTION BY WARM TEMPERATURE</scope>
    <source>
        <strain>cv. Columbia</strain>
    </source>
</reference>
<reference key="15">
    <citation type="journal article" date="2019" name="Proc. Natl. Acad. Sci. U.S.A.">
        <title>Arabidopsis PP6 phosphatases dephosphorylate PIF proteins to repress photomorphogenesis.</title>
        <authorList>
            <person name="Yu X."/>
            <person name="Dong J."/>
            <person name="Deng Z."/>
            <person name="Jiang Y."/>
            <person name="Wu C."/>
            <person name="Qin X."/>
            <person name="Terzaghi W."/>
            <person name="Chen H."/>
            <person name="Dai M."/>
            <person name="Deng X.W."/>
        </authorList>
    </citation>
    <scope>INTERACTION WITH FYPP1 AND FYPP3</scope>
</reference>
<reference key="16">
    <citation type="journal article" date="2021" name="Nat. Commun.">
        <title>RCB initiates Arabidopsis thermomorphogenesis by stabilizing the thermoregulator PIF4 in the daytime.</title>
        <authorList>
            <person name="Qiu Y."/>
            <person name="Pasoreck E.K."/>
            <person name="Yoo C.Y."/>
            <person name="He J."/>
            <person name="Wang H."/>
            <person name="Bajracharya A."/>
            <person name="Li M."/>
            <person name="Larsen H.D."/>
            <person name="Cheung S."/>
            <person name="Chen M."/>
        </authorList>
    </citation>
    <scope>FUNCTION</scope>
    <scope>INDUCTION BY WARM TEMPERATURE</scope>
    <source>
        <strain>cv. Columbia</strain>
    </source>
</reference>
<reference key="17">
    <citation type="journal article" date="2022" name="Plant Physiol.">
        <title>PHYTOCHROME-INTERACTING FACTOR 4/HEMERA-mediated thermosensory growth requires the mediator subunit MED14.</title>
        <authorList>
            <person name="Bajracharya A."/>
            <person name="Xi J."/>
            <person name="Grace K.F."/>
            <person name="Bayer E.E."/>
            <person name="Grant C.A."/>
            <person name="Clutton C.H."/>
            <person name="Baerson S.R."/>
            <person name="Agarwal A.K."/>
            <person name="Qiu Y."/>
        </authorList>
    </citation>
    <scope>FUNCTION</scope>
    <scope>DISRUPTION PHENOTYPE</scope>
    <scope>INTERACTION WITH MED14</scope>
    <source>
        <strain>cv. Columbia</strain>
    </source>
</reference>
<evidence type="ECO:0000250" key="1">
    <source>
        <dbReference type="UniProtKB" id="Q84LH8"/>
    </source>
</evidence>
<evidence type="ECO:0000255" key="2">
    <source>
        <dbReference type="PROSITE-ProRule" id="PRU00981"/>
    </source>
</evidence>
<evidence type="ECO:0000256" key="3">
    <source>
        <dbReference type="SAM" id="MobiDB-lite"/>
    </source>
</evidence>
<evidence type="ECO:0000269" key="4">
    <source>
    </source>
</evidence>
<evidence type="ECO:0000269" key="5">
    <source>
    </source>
</evidence>
<evidence type="ECO:0000269" key="6">
    <source>
    </source>
</evidence>
<evidence type="ECO:0000269" key="7">
    <source>
    </source>
</evidence>
<evidence type="ECO:0000269" key="8">
    <source>
    </source>
</evidence>
<evidence type="ECO:0000269" key="9">
    <source>
    </source>
</evidence>
<evidence type="ECO:0000269" key="10">
    <source>
    </source>
</evidence>
<evidence type="ECO:0000269" key="11">
    <source>
    </source>
</evidence>
<evidence type="ECO:0000269" key="12">
    <source>
    </source>
</evidence>
<evidence type="ECO:0000269" key="13">
    <source>
    </source>
</evidence>
<evidence type="ECO:0000269" key="14">
    <source>
    </source>
</evidence>
<evidence type="ECO:0000269" key="15">
    <source>
    </source>
</evidence>
<evidence type="ECO:0000269" key="16">
    <source>
    </source>
</evidence>
<evidence type="ECO:0000303" key="17">
    <source>
    </source>
</evidence>
<evidence type="ECO:0000303" key="18">
    <source>
    </source>
</evidence>
<evidence type="ECO:0000303" key="19">
    <source>
    </source>
</evidence>
<evidence type="ECO:0000303" key="20">
    <source>
    </source>
</evidence>
<evidence type="ECO:0000303" key="21">
    <source>
    </source>
</evidence>
<evidence type="ECO:0000305" key="22"/>
<evidence type="ECO:0000312" key="23">
    <source>
        <dbReference type="Araport" id="AT2G43010"/>
    </source>
</evidence>
<evidence type="ECO:0000312" key="24">
    <source>
        <dbReference type="EMBL" id="AAD22130.2"/>
    </source>
</evidence>
<protein>
    <recommendedName>
        <fullName evidence="21">Transcription factor PIF4</fullName>
    </recommendedName>
    <alternativeName>
        <fullName evidence="17">Basic helix-loop-helix protein 9</fullName>
        <shortName evidence="17">AtbHLH9</shortName>
        <shortName evidence="17">bHLH 9</shortName>
    </alternativeName>
    <alternativeName>
        <fullName evidence="21">Phytochrome-interacting factor 4</fullName>
    </alternativeName>
    <alternativeName>
        <fullName evidence="18">Short under red-light 2</fullName>
    </alternativeName>
    <alternativeName>
        <fullName evidence="19">Transcription factor EN 102</fullName>
    </alternativeName>
    <alternativeName>
        <fullName evidence="17">bHLH transcription factor bHLH009</fullName>
    </alternativeName>
</protein>
<name>PIF4_ARATH</name>
<gene>
    <name evidence="21" type="primary">PIF4</name>
    <name evidence="17" type="synonym">BHLH9</name>
    <name evidence="19" type="synonym">EN102</name>
    <name evidence="18" type="synonym">SRL2</name>
    <name evidence="23" type="ordered locus">At2g43010</name>
    <name evidence="24" type="ORF">MFL8.13</name>
</gene>
<comment type="function">
    <text evidence="1 12 13 15 16">Transcription factor acting negatively in the phytochrome B signaling pathway. May regulate the expression of a subset of genes involved in cell expansion by binding to the G-box motif (By similarity). Activated by CRY1 and CRY2 in response to low blue light (LBL) by direct binding at chromatin on E-box variant 5'-CA[CT]GTG-3' to stimulate specific gene expression to adapt global physiology (e.g. hypocotyl elongation in low blue light) (PubMed:26724867). Element of a PIF4/HMR/MED14-dependent thermoresponsive process; collaboratively with its transcriptional coactivator PTAC12/HMR/PAP5, involved in the regulation of thermoresponsive growth-relevant genes (e.g. mainly involved in biosynthesis and signaling of the phytohormone auxin) leading to daytime warm temperature elicitation of MED14-dependent thermomorphogenesis (e.g. hypocotyl elongation) (PubMed:30635559, PubMed:33824329, PubMed:36063057).</text>
</comment>
<comment type="subunit">
    <text evidence="5 6 8 9 11 12 13 14 16">Interacts preferentially with the Pfr form of phytochrome B (phyB). Binds DNA as a homodimer, but once bound to DNA, loses its capacity to interact with phyB. Interacts with APRR1/TOC1 and PIF3. Binds to RGL2 and RGA. Forms non-functional heterodimer with HFR1. Interacts with PHYB, CRY1 and CRY2 in the nucleus in response to low blue light (LBL) (PubMed:12826627, PubMed:12897250, PubMed:20093430, PubMed:23224238, PubMed:26724867). Interacts with FYPP1 and FYPP3 (PubMed:31527236). Associates to PTAC12/HMR/PAP5, which acts as a transcriptional coactivator to trigger the thermoresponsive growth-relevant genes and promote warm-temperature-dependent PIF4 accumulation (PubMed:25944101, PubMed:30635559). Interacts with MED14 (PubMed:36063057).</text>
</comment>
<comment type="interaction">
    <interactant intactId="EBI-625716">
        <id>Q8W2F3</id>
    </interactant>
    <interactant intactId="EBI-1803261">
        <id>Q8S307</id>
        <label>BZR1</label>
    </interactant>
    <organismsDiffer>false</organismsDiffer>
    <experiments>4</experiments>
</comment>
<comment type="interaction">
    <interactant intactId="EBI-625716">
        <id>Q8W2F3</id>
    </interactant>
    <interactant intactId="EBI-626001">
        <id>Q9FE22</id>
        <label>HFR1</label>
    </interactant>
    <organismsDiffer>false</organismsDiffer>
    <experiments>2</experiments>
</comment>
<comment type="interaction">
    <interactant intactId="EBI-625716">
        <id>Q8W2F3</id>
    </interactant>
    <interactant intactId="EBI-963624">
        <id>Q9SLH3</id>
        <label>RGA</label>
    </interactant>
    <organismsDiffer>false</organismsDiffer>
    <experiments>4</experiments>
</comment>
<comment type="interaction">
    <interactant intactId="EBI-625732">
        <id>Q8W2F3-2</id>
    </interactant>
    <interactant intactId="EBI-624446">
        <id>P14712</id>
        <label>PHYA</label>
    </interactant>
    <organismsDiffer>false</organismsDiffer>
    <experiments>2</experiments>
</comment>
<comment type="interaction">
    <interactant intactId="EBI-625732">
        <id>Q8W2F3-2</id>
    </interactant>
    <interactant intactId="EBI-300727">
        <id>P14713</id>
        <label>PHYB</label>
    </interactant>
    <organismsDiffer>false</organismsDiffer>
    <experiments>3</experiments>
</comment>
<comment type="interaction">
    <interactant intactId="EBI-625732">
        <id>Q8W2F3-2</id>
    </interactant>
    <interactant intactId="EBI-625701">
        <id>O80536</id>
        <label>PIF3</label>
    </interactant>
    <organismsDiffer>false</organismsDiffer>
    <experiments>3</experiments>
</comment>
<comment type="subcellular location">
    <subcellularLocation>
        <location evidence="12">Nucleus</location>
    </subcellularLocation>
</comment>
<comment type="alternative products">
    <event type="alternative splicing"/>
    <isoform>
        <id>Q8W2F3-1</id>
        <name>Long</name>
        <sequence type="displayed"/>
    </isoform>
    <isoform>
        <id>Q8W2F3-2</id>
        <name>Short</name>
        <sequence type="described" ref="VSP_002146 VSP_002147"/>
    </isoform>
</comment>
<comment type="tissue specificity">
    <text evidence="10">Mainly expressed in leaves, stems and seedlings, and, to a lower extent, in fruits, flowers and roots.</text>
</comment>
<comment type="developmental stage">
    <text evidence="10">Expressed in maturating seeds, dry seeds and upon seed imbibition.</text>
</comment>
<comment type="induction">
    <text evidence="4 5 10 13 15">By UV treatment. Down-regulated by ethylene (ACC) and auxin (IAA), but up-regulated by salt (NaCl), cold and heat (PubMed:23708772). Follows a free-running robust circadian rhythm, with higher levels during the light phase (PubMed:23708772). Rapidly induced by light in etiolated plants. Sixfold induction by both red and far-red light. Accumulates in response to warm temperatures (e.g. 27 degrees Celsius) via PTAC12/HMR/PAP5-mediated stabilization in the light (PubMed:30635559, PubMed:33824329).</text>
</comment>
<comment type="disruption phenotype">
    <text evidence="13 16">Reduced responses to warm temperature (e.g. 27 degrees Celsius), including thermoresponsive growth-relevant genes expression and hypocotyl growth; this phenotype is stronger in the doule mutant lacking both PIF4 and PTAC12/HMR/PAP5.</text>
</comment>
<comment type="similarity">
    <text evidence="22">Belongs to the bHLH protein family.</text>
</comment>
<organism>
    <name type="scientific">Arabidopsis thaliana</name>
    <name type="common">Mouse-ear cress</name>
    <dbReference type="NCBI Taxonomy" id="3702"/>
    <lineage>
        <taxon>Eukaryota</taxon>
        <taxon>Viridiplantae</taxon>
        <taxon>Streptophyta</taxon>
        <taxon>Embryophyta</taxon>
        <taxon>Tracheophyta</taxon>
        <taxon>Spermatophyta</taxon>
        <taxon>Magnoliopsida</taxon>
        <taxon>eudicotyledons</taxon>
        <taxon>Gunneridae</taxon>
        <taxon>Pentapetalae</taxon>
        <taxon>rosids</taxon>
        <taxon>malvids</taxon>
        <taxon>Brassicales</taxon>
        <taxon>Brassicaceae</taxon>
        <taxon>Camelineae</taxon>
        <taxon>Arabidopsis</taxon>
    </lineage>
</organism>
<dbReference type="EMBL" id="AJ440755">
    <property type="protein sequence ID" value="CAD29449.1"/>
    <property type="molecule type" value="mRNA"/>
</dbReference>
<dbReference type="EMBL" id="AF251694">
    <property type="protein sequence ID" value="AAL55716.1"/>
    <property type="molecule type" value="mRNA"/>
</dbReference>
<dbReference type="EMBL" id="AC006224">
    <property type="protein sequence ID" value="AAD22130.2"/>
    <property type="molecule type" value="Genomic_DNA"/>
</dbReference>
<dbReference type="EMBL" id="CP002685">
    <property type="protein sequence ID" value="AEC10197.1"/>
    <property type="molecule type" value="Genomic_DNA"/>
</dbReference>
<dbReference type="EMBL" id="AY142625">
    <property type="protein sequence ID" value="AAN13083.1"/>
    <property type="molecule type" value="mRNA"/>
</dbReference>
<dbReference type="EMBL" id="AF360221">
    <property type="protein sequence ID" value="AAK25931.1"/>
    <property type="molecule type" value="mRNA"/>
</dbReference>
<dbReference type="EMBL" id="EF193514">
    <property type="protein sequence ID" value="ABP96467.1"/>
    <property type="molecule type" value="Genomic_DNA"/>
</dbReference>
<dbReference type="EMBL" id="EF193515">
    <property type="protein sequence ID" value="ABP96468.1"/>
    <property type="molecule type" value="Genomic_DNA"/>
</dbReference>
<dbReference type="EMBL" id="EF193516">
    <property type="protein sequence ID" value="ABP96469.1"/>
    <property type="molecule type" value="Genomic_DNA"/>
</dbReference>
<dbReference type="EMBL" id="EF193517">
    <property type="protein sequence ID" value="ABP96470.1"/>
    <property type="molecule type" value="Genomic_DNA"/>
</dbReference>
<dbReference type="EMBL" id="EF193518">
    <property type="protein sequence ID" value="ABP96471.1"/>
    <property type="molecule type" value="Genomic_DNA"/>
</dbReference>
<dbReference type="EMBL" id="EF193519">
    <property type="protein sequence ID" value="ABP96472.1"/>
    <property type="molecule type" value="Genomic_DNA"/>
</dbReference>
<dbReference type="EMBL" id="EF193520">
    <property type="protein sequence ID" value="ABP96473.1"/>
    <property type="molecule type" value="Genomic_DNA"/>
</dbReference>
<dbReference type="EMBL" id="EF193521">
    <property type="protein sequence ID" value="ABP96474.1"/>
    <property type="molecule type" value="Genomic_DNA"/>
</dbReference>
<dbReference type="EMBL" id="EF193522">
    <property type="protein sequence ID" value="ABP96475.1"/>
    <property type="molecule type" value="Genomic_DNA"/>
</dbReference>
<dbReference type="EMBL" id="EF193523">
    <property type="protein sequence ID" value="ABP96476.1"/>
    <property type="molecule type" value="Genomic_DNA"/>
</dbReference>
<dbReference type="EMBL" id="EF193524">
    <property type="protein sequence ID" value="ABP96477.1"/>
    <property type="molecule type" value="Genomic_DNA"/>
</dbReference>
<dbReference type="EMBL" id="EF193525">
    <property type="protein sequence ID" value="ABP96478.1"/>
    <property type="molecule type" value="Genomic_DNA"/>
</dbReference>
<dbReference type="EMBL" id="EF193526">
    <property type="protein sequence ID" value="ABP96479.1"/>
    <property type="molecule type" value="Genomic_DNA"/>
</dbReference>
<dbReference type="EMBL" id="EF193527">
    <property type="protein sequence ID" value="ABP96480.1"/>
    <property type="molecule type" value="Genomic_DNA"/>
</dbReference>
<dbReference type="PIR" id="H84860">
    <property type="entry name" value="H84860"/>
</dbReference>
<dbReference type="RefSeq" id="NP_565991.2">
    <molecule id="Q8W2F3-1"/>
    <property type="nucleotide sequence ID" value="NM_129862.3"/>
</dbReference>
<dbReference type="SMR" id="Q8W2F3"/>
<dbReference type="BioGRID" id="4240">
    <property type="interactions" value="26"/>
</dbReference>
<dbReference type="DIP" id="DIP-33903N"/>
<dbReference type="FunCoup" id="Q8W2F3">
    <property type="interactions" value="774"/>
</dbReference>
<dbReference type="IntAct" id="Q8W2F3">
    <property type="interactions" value="13"/>
</dbReference>
<dbReference type="MINT" id="Q8W2F3"/>
<dbReference type="STRING" id="3702.Q8W2F3"/>
<dbReference type="iPTMnet" id="Q8W2F3"/>
<dbReference type="PaxDb" id="3702-AT2G43010.1"/>
<dbReference type="ProteomicsDB" id="236753">
    <molecule id="Q8W2F3-1"/>
</dbReference>
<dbReference type="EnsemblPlants" id="AT2G43010.1">
    <molecule id="Q8W2F3-1"/>
    <property type="protein sequence ID" value="AT2G43010.1"/>
    <property type="gene ID" value="AT2G43010"/>
</dbReference>
<dbReference type="GeneID" id="818903"/>
<dbReference type="Gramene" id="AT2G43010.1">
    <molecule id="Q8W2F3-1"/>
    <property type="protein sequence ID" value="AT2G43010.1"/>
    <property type="gene ID" value="AT2G43010"/>
</dbReference>
<dbReference type="KEGG" id="ath:AT2G43010"/>
<dbReference type="Araport" id="AT2G43010"/>
<dbReference type="TAIR" id="AT2G43010">
    <property type="gene designation" value="PIF4"/>
</dbReference>
<dbReference type="eggNOG" id="ENOG502QTIX">
    <property type="taxonomic scope" value="Eukaryota"/>
</dbReference>
<dbReference type="InParanoid" id="Q8W2F3"/>
<dbReference type="OrthoDB" id="690068at2759"/>
<dbReference type="PhylomeDB" id="Q8W2F3"/>
<dbReference type="PRO" id="PR:Q8W2F3"/>
<dbReference type="Proteomes" id="UP000006548">
    <property type="component" value="Chromosome 2"/>
</dbReference>
<dbReference type="ExpressionAtlas" id="Q8W2F3">
    <property type="expression patterns" value="baseline and differential"/>
</dbReference>
<dbReference type="GO" id="GO:0005634">
    <property type="term" value="C:nucleus"/>
    <property type="evidence" value="ECO:0000314"/>
    <property type="project" value="UniProtKB"/>
</dbReference>
<dbReference type="GO" id="GO:0003677">
    <property type="term" value="F:DNA binding"/>
    <property type="evidence" value="ECO:0000314"/>
    <property type="project" value="TAIR"/>
</dbReference>
<dbReference type="GO" id="GO:0003700">
    <property type="term" value="F:DNA-binding transcription factor activity"/>
    <property type="evidence" value="ECO:0000250"/>
    <property type="project" value="TAIR"/>
</dbReference>
<dbReference type="GO" id="GO:1990841">
    <property type="term" value="F:promoter-specific chromatin binding"/>
    <property type="evidence" value="ECO:0000353"/>
    <property type="project" value="TAIR"/>
</dbReference>
<dbReference type="GO" id="GO:0046983">
    <property type="term" value="F:protein dimerization activity"/>
    <property type="evidence" value="ECO:0007669"/>
    <property type="project" value="InterPro"/>
</dbReference>
<dbReference type="GO" id="GO:0009704">
    <property type="term" value="P:de-etiolation"/>
    <property type="evidence" value="ECO:0000315"/>
    <property type="project" value="TAIR"/>
</dbReference>
<dbReference type="GO" id="GO:0009638">
    <property type="term" value="P:phototropism"/>
    <property type="evidence" value="ECO:0000315"/>
    <property type="project" value="TAIR"/>
</dbReference>
<dbReference type="GO" id="GO:0140922">
    <property type="term" value="P:positive regulation of thermomorphogenesis"/>
    <property type="evidence" value="ECO:0000315"/>
    <property type="project" value="UniProtKB"/>
</dbReference>
<dbReference type="GO" id="GO:0010161">
    <property type="term" value="P:red light signaling pathway"/>
    <property type="evidence" value="ECO:0000316"/>
    <property type="project" value="TAIR"/>
</dbReference>
<dbReference type="GO" id="GO:0010017">
    <property type="term" value="P:red or far-red light signaling pathway"/>
    <property type="evidence" value="ECO:0000315"/>
    <property type="project" value="TAIR"/>
</dbReference>
<dbReference type="GO" id="GO:0009585">
    <property type="term" value="P:red, far-red light phototransduction"/>
    <property type="evidence" value="ECO:0007669"/>
    <property type="project" value="UniProtKB-KW"/>
</dbReference>
<dbReference type="GO" id="GO:0010600">
    <property type="term" value="P:regulation of auxin biosynthetic process"/>
    <property type="evidence" value="ECO:0000314"/>
    <property type="project" value="TAIR"/>
</dbReference>
<dbReference type="GO" id="GO:0010928">
    <property type="term" value="P:regulation of auxin mediated signaling pathway"/>
    <property type="evidence" value="ECO:0000314"/>
    <property type="project" value="TAIR"/>
</dbReference>
<dbReference type="GO" id="GO:1905421">
    <property type="term" value="P:regulation of plant organ morphogenesis"/>
    <property type="evidence" value="ECO:0000315"/>
    <property type="project" value="UniProtKB"/>
</dbReference>
<dbReference type="GO" id="GO:0006357">
    <property type="term" value="P:regulation of transcription by RNA polymerase II"/>
    <property type="evidence" value="ECO:0000315"/>
    <property type="project" value="UniProtKB"/>
</dbReference>
<dbReference type="GO" id="GO:0009733">
    <property type="term" value="P:response to auxin"/>
    <property type="evidence" value="ECO:0000270"/>
    <property type="project" value="UniProtKB"/>
</dbReference>
<dbReference type="GO" id="GO:0009409">
    <property type="term" value="P:response to cold"/>
    <property type="evidence" value="ECO:0000270"/>
    <property type="project" value="UniProtKB"/>
</dbReference>
<dbReference type="GO" id="GO:0009723">
    <property type="term" value="P:response to ethylene"/>
    <property type="evidence" value="ECO:0000270"/>
    <property type="project" value="UniProtKB"/>
</dbReference>
<dbReference type="GO" id="GO:0009408">
    <property type="term" value="P:response to heat"/>
    <property type="evidence" value="ECO:0000270"/>
    <property type="project" value="UniProtKB"/>
</dbReference>
<dbReference type="GO" id="GO:0010244">
    <property type="term" value="P:response to low fluence blue light stimulus by blue low-fluence system"/>
    <property type="evidence" value="ECO:0000314"/>
    <property type="project" value="UniProtKB"/>
</dbReference>
<dbReference type="GO" id="GO:1902074">
    <property type="term" value="P:response to salt"/>
    <property type="evidence" value="ECO:0000270"/>
    <property type="project" value="UniProtKB"/>
</dbReference>
<dbReference type="GO" id="GO:0009266">
    <property type="term" value="P:response to temperature stimulus"/>
    <property type="evidence" value="ECO:0000315"/>
    <property type="project" value="UniProtKB"/>
</dbReference>
<dbReference type="CDD" id="cd11445">
    <property type="entry name" value="bHLH_AtPIF_like"/>
    <property type="match status" value="1"/>
</dbReference>
<dbReference type="FunFam" id="4.10.280.10:FF:000004">
    <property type="entry name" value="Basic helix-loop-helix transcription factor"/>
    <property type="match status" value="1"/>
</dbReference>
<dbReference type="Gene3D" id="4.10.280.10">
    <property type="entry name" value="Helix-loop-helix DNA-binding domain"/>
    <property type="match status" value="1"/>
</dbReference>
<dbReference type="InterPro" id="IPR011598">
    <property type="entry name" value="bHLH_dom"/>
</dbReference>
<dbReference type="InterPro" id="IPR036638">
    <property type="entry name" value="HLH_DNA-bd_sf"/>
</dbReference>
<dbReference type="InterPro" id="IPR047265">
    <property type="entry name" value="PIF1-like_bHLH"/>
</dbReference>
<dbReference type="InterPro" id="IPR044273">
    <property type="entry name" value="PIF3-like"/>
</dbReference>
<dbReference type="PANTHER" id="PTHR46807:SF7">
    <property type="entry name" value="BHLH DOMAIN-CONTAINING PROTEIN"/>
    <property type="match status" value="1"/>
</dbReference>
<dbReference type="PANTHER" id="PTHR46807">
    <property type="entry name" value="TRANSCRIPTION FACTOR PIF3"/>
    <property type="match status" value="1"/>
</dbReference>
<dbReference type="Pfam" id="PF00010">
    <property type="entry name" value="HLH"/>
    <property type="match status" value="1"/>
</dbReference>
<dbReference type="SMART" id="SM00353">
    <property type="entry name" value="HLH"/>
    <property type="match status" value="1"/>
</dbReference>
<dbReference type="SUPFAM" id="SSF47459">
    <property type="entry name" value="HLH, helix-loop-helix DNA-binding domain"/>
    <property type="match status" value="1"/>
</dbReference>
<dbReference type="PROSITE" id="PS50888">
    <property type="entry name" value="BHLH"/>
    <property type="match status" value="1"/>
</dbReference>
<sequence>MEHQGWSFEENYSLSTNRRSIRPQDELVELLWRDGQVVLQSQTHREQTQTQKQDHHEEALRSSTFLEDQETVSWIQYPPDEDPFEPDDFSSHFFSTMDPLQRPTSETVKPKSSPEPPQVMVKPKACPDPPPQVMPPPKFRLTNSSSGIRETEMEQYSVTTVGPSHCGSNPSQNDLDVSMSHDRSKNIEEKLNPNASSSSGGSSGCSFGKDIKEMASGRCITTDRKRKRINHTDESVSLSDAIGNKSNQRSGSNRRSRAAEVHNLSERRRRDRINERMKALQELIPHCSKTDKASILDEAIDYLKSLQLQLQVMWMGSGMAAAAASAPMMFPGVQPQQFIRQIQSPVQLPRFPVMDQSAIQNNPGLVCQNPVQNQIISDRFARYIGGFPHMQAATQMQPMEMLRFSSPAGQQSQQPSSVPTKTTDGSRLDH</sequence>
<accession>Q8W2F3</accession>
<accession>A5Y7D4</accession>
<accession>A5Y7D5</accession>
<accession>A5Y7D6</accession>
<accession>A5Y7D7</accession>
<accession>A5Y7D8</accession>
<accession>A5Y7D9</accession>
<accession>A5Y7E0</accession>
<accession>A5Y7E1</accession>
<accession>A5Y7E2</accession>
<accession>A5Y7E3</accession>
<accession>A5Y7E4</accession>
<accession>A5Y7E5</accession>
<accession>A5Y7E6</accession>
<accession>A5Y7E7</accession>
<accession>Q9C5I8</accession>
<accession>Q9SKX6</accession>
<proteinExistence type="evidence at protein level"/>
<feature type="chain" id="PRO_0000127429" description="Transcription factor PIF4">
    <location>
        <begin position="1"/>
        <end position="430"/>
    </location>
</feature>
<feature type="domain" description="bHLH" evidence="2">
    <location>
        <begin position="257"/>
        <end position="306"/>
    </location>
</feature>
<feature type="region of interest" description="Disordered" evidence="3">
    <location>
        <begin position="42"/>
        <end position="71"/>
    </location>
</feature>
<feature type="region of interest" description="Disordered" evidence="3">
    <location>
        <begin position="97"/>
        <end position="136"/>
    </location>
</feature>
<feature type="region of interest" description="Disordered" evidence="3">
    <location>
        <begin position="160"/>
        <end position="183"/>
    </location>
</feature>
<feature type="region of interest" description="Disordered" evidence="3">
    <location>
        <begin position="223"/>
        <end position="266"/>
    </location>
</feature>
<feature type="region of interest" description="Disordered" evidence="3">
    <location>
        <begin position="405"/>
        <end position="430"/>
    </location>
</feature>
<feature type="compositionally biased region" description="Basic and acidic residues" evidence="3">
    <location>
        <begin position="43"/>
        <end position="60"/>
    </location>
</feature>
<feature type="compositionally biased region" description="Polar residues" evidence="3">
    <location>
        <begin position="61"/>
        <end position="71"/>
    </location>
</feature>
<feature type="compositionally biased region" description="Pro residues" evidence="3">
    <location>
        <begin position="126"/>
        <end position="136"/>
    </location>
</feature>
<feature type="compositionally biased region" description="Polar residues" evidence="3">
    <location>
        <begin position="160"/>
        <end position="175"/>
    </location>
</feature>
<feature type="compositionally biased region" description="Low complexity" evidence="3">
    <location>
        <begin position="244"/>
        <end position="253"/>
    </location>
</feature>
<feature type="compositionally biased region" description="Basic and acidic residues" evidence="3">
    <location>
        <begin position="257"/>
        <end position="266"/>
    </location>
</feature>
<feature type="compositionally biased region" description="Low complexity" evidence="3">
    <location>
        <begin position="405"/>
        <end position="419"/>
    </location>
</feature>
<feature type="splice variant" id="VSP_002146" description="In isoform Short." evidence="20">
    <original>RRRDRINERMKA</original>
    <variation>VLHRFVYIIYNI</variation>
    <location>
        <begin position="268"/>
        <end position="279"/>
    </location>
</feature>
<feature type="splice variant" id="VSP_002147" description="In isoform Short." evidence="20">
    <location>
        <begin position="280"/>
        <end position="430"/>
    </location>
</feature>
<feature type="sequence variant" description="In strain: cv. Bla-6, cv. Et-0, cv. Li-5:3, cv. Mt-0, cv. Pa-2 and cv. Tsu-1." evidence="7">
    <original>H</original>
    <variation>D</variation>
    <location>
        <position position="231"/>
    </location>
</feature>
<feature type="sequence conflict" description="In Ref. 5; AAK25931." evidence="22" ref="5">
    <original>G</original>
    <variation>S</variation>
    <location>
        <position position="204"/>
    </location>
</feature>